<organism>
    <name type="scientific">Escherichia coli (strain K12)</name>
    <dbReference type="NCBI Taxonomy" id="83333"/>
    <lineage>
        <taxon>Bacteria</taxon>
        <taxon>Pseudomonadati</taxon>
        <taxon>Pseudomonadota</taxon>
        <taxon>Gammaproteobacteria</taxon>
        <taxon>Enterobacterales</taxon>
        <taxon>Enterobacteriaceae</taxon>
        <taxon>Escherichia</taxon>
    </lineage>
</organism>
<feature type="chain" id="PRO_0000074415" description="Probable zinc protease PqqL">
    <location>
        <begin position="1"/>
        <end position="931"/>
    </location>
</feature>
<feature type="active site" description="Proton acceptor" evidence="2">
    <location>
        <position position="83"/>
    </location>
</feature>
<feature type="binding site" evidence="2">
    <location>
        <position position="80"/>
    </location>
    <ligand>
        <name>Zn(2+)</name>
        <dbReference type="ChEBI" id="CHEBI:29105"/>
    </ligand>
</feature>
<feature type="binding site" evidence="2">
    <location>
        <position position="84"/>
    </location>
    <ligand>
        <name>Zn(2+)</name>
        <dbReference type="ChEBI" id="CHEBI:29105"/>
    </ligand>
</feature>
<feature type="binding site" evidence="2">
    <location>
        <position position="160"/>
    </location>
    <ligand>
        <name>Zn(2+)</name>
        <dbReference type="ChEBI" id="CHEBI:29105"/>
    </ligand>
</feature>
<feature type="sequence conflict" description="In Ref. 1; CAA50734." evidence="3" ref="1">
    <original>A</original>
    <variation>V</variation>
    <location>
        <position position="360"/>
    </location>
</feature>
<feature type="sequence conflict" description="In Ref. 1; CAA50735." evidence="3" ref="1">
    <original>L</original>
    <variation>V</variation>
    <location>
        <position position="867"/>
    </location>
</feature>
<feature type="strand" evidence="5">
    <location>
        <begin position="36"/>
        <end position="39"/>
    </location>
</feature>
<feature type="strand" evidence="5">
    <location>
        <begin position="45"/>
        <end position="50"/>
    </location>
</feature>
<feature type="strand" evidence="5">
    <location>
        <begin position="57"/>
        <end position="65"/>
    </location>
</feature>
<feature type="helix" evidence="5">
    <location>
        <begin position="68"/>
        <end position="70"/>
    </location>
</feature>
<feature type="helix" evidence="5">
    <location>
        <begin position="78"/>
        <end position="85"/>
    </location>
</feature>
<feature type="strand" evidence="5">
    <location>
        <begin position="88"/>
        <end position="94"/>
    </location>
</feature>
<feature type="helix" evidence="5">
    <location>
        <begin position="97"/>
        <end position="103"/>
    </location>
</feature>
<feature type="turn" evidence="5">
    <location>
        <begin position="104"/>
        <end position="106"/>
    </location>
</feature>
<feature type="turn" evidence="5">
    <location>
        <begin position="109"/>
        <end position="111"/>
    </location>
</feature>
<feature type="strand" evidence="5">
    <location>
        <begin position="112"/>
        <end position="117"/>
    </location>
</feature>
<feature type="strand" evidence="5">
    <location>
        <begin position="122"/>
        <end position="131"/>
    </location>
</feature>
<feature type="helix" evidence="5">
    <location>
        <begin position="133"/>
        <end position="148"/>
    </location>
</feature>
<feature type="helix" evidence="5">
    <location>
        <begin position="154"/>
        <end position="170"/>
    </location>
</feature>
<feature type="helix" evidence="5">
    <location>
        <begin position="174"/>
        <end position="186"/>
    </location>
</feature>
<feature type="turn" evidence="5">
    <location>
        <begin position="187"/>
        <end position="189"/>
    </location>
</feature>
<feature type="helix" evidence="5">
    <location>
        <begin position="191"/>
        <end position="194"/>
    </location>
</feature>
<feature type="helix" evidence="5">
    <location>
        <begin position="201"/>
        <end position="206"/>
    </location>
</feature>
<feature type="helix" evidence="5">
    <location>
        <begin position="209"/>
        <end position="219"/>
    </location>
</feature>
<feature type="helix" evidence="5">
    <location>
        <begin position="222"/>
        <end position="224"/>
    </location>
</feature>
<feature type="strand" evidence="5">
    <location>
        <begin position="225"/>
        <end position="232"/>
    </location>
</feature>
<feature type="helix" evidence="5">
    <location>
        <begin position="235"/>
        <end position="246"/>
    </location>
</feature>
<feature type="strand" evidence="5">
    <location>
        <begin position="267"/>
        <end position="274"/>
    </location>
</feature>
<feature type="strand" evidence="5">
    <location>
        <begin position="282"/>
        <end position="290"/>
    </location>
</feature>
<feature type="helix" evidence="5">
    <location>
        <begin position="297"/>
        <end position="322"/>
    </location>
</feature>
<feature type="strand" evidence="5">
    <location>
        <begin position="328"/>
        <end position="340"/>
    </location>
</feature>
<feature type="strand" evidence="5">
    <location>
        <begin position="343"/>
        <end position="353"/>
    </location>
</feature>
<feature type="helix" evidence="5">
    <location>
        <begin position="357"/>
        <end position="374"/>
    </location>
</feature>
<feature type="helix" evidence="5">
    <location>
        <begin position="378"/>
        <end position="397"/>
    </location>
</feature>
<feature type="helix" evidence="5">
    <location>
        <begin position="399"/>
        <end position="401"/>
    </location>
</feature>
<feature type="helix" evidence="5">
    <location>
        <begin position="404"/>
        <end position="417"/>
    </location>
</feature>
<feature type="helix" evidence="5">
    <location>
        <begin position="424"/>
        <end position="434"/>
    </location>
</feature>
<feature type="helix" evidence="5">
    <location>
        <begin position="435"/>
        <end position="437"/>
    </location>
</feature>
<feature type="helix" evidence="5">
    <location>
        <begin position="440"/>
        <end position="451"/>
    </location>
</feature>
<feature type="strand" evidence="5">
    <location>
        <begin position="456"/>
        <end position="464"/>
    </location>
</feature>
<feature type="helix" evidence="5">
    <location>
        <begin position="465"/>
        <end position="470"/>
    </location>
</feature>
<feature type="helix" evidence="5">
    <location>
        <begin position="474"/>
        <end position="485"/>
    </location>
</feature>
<feature type="strand" evidence="4">
    <location>
        <begin position="511"/>
        <end position="518"/>
    </location>
</feature>
<feature type="strand" evidence="4">
    <location>
        <begin position="521"/>
        <end position="526"/>
    </location>
</feature>
<feature type="strand" evidence="4">
    <location>
        <begin position="531"/>
        <end position="535"/>
    </location>
</feature>
<feature type="strand" evidence="4">
    <location>
        <begin position="543"/>
        <end position="551"/>
    </location>
</feature>
<feature type="helix" evidence="4">
    <location>
        <begin position="554"/>
        <end position="556"/>
    </location>
</feature>
<feature type="turn" evidence="4">
    <location>
        <begin position="559"/>
        <end position="561"/>
    </location>
</feature>
<feature type="helix" evidence="4">
    <location>
        <begin position="562"/>
        <end position="564"/>
    </location>
</feature>
<feature type="helix" evidence="4">
    <location>
        <begin position="565"/>
        <end position="573"/>
    </location>
</feature>
<feature type="helix" evidence="4">
    <location>
        <begin position="582"/>
        <end position="591"/>
    </location>
</feature>
<feature type="strand" evidence="4">
    <location>
        <begin position="595"/>
        <end position="600"/>
    </location>
</feature>
<feature type="strand" evidence="4">
    <location>
        <begin position="605"/>
        <end position="612"/>
    </location>
</feature>
<feature type="helix" evidence="4">
    <location>
        <begin position="617"/>
        <end position="628"/>
    </location>
</feature>
<feature type="helix" evidence="4">
    <location>
        <begin position="634"/>
        <end position="649"/>
    </location>
</feature>
<feature type="helix" evidence="4">
    <location>
        <begin position="651"/>
        <end position="653"/>
    </location>
</feature>
<feature type="helix" evidence="4">
    <location>
        <begin position="655"/>
        <end position="667"/>
    </location>
</feature>
<feature type="helix" evidence="4">
    <location>
        <begin position="671"/>
        <end position="673"/>
    </location>
</feature>
<feature type="helix" evidence="4">
    <location>
        <begin position="678"/>
        <end position="683"/>
    </location>
</feature>
<feature type="helix" evidence="4">
    <location>
        <begin position="686"/>
        <end position="694"/>
    </location>
</feature>
<feature type="helix" evidence="4">
    <location>
        <begin position="700"/>
        <end position="702"/>
    </location>
</feature>
<feature type="strand" evidence="4">
    <location>
        <begin position="703"/>
        <end position="709"/>
    </location>
</feature>
<feature type="helix" evidence="4">
    <location>
        <begin position="713"/>
        <end position="723"/>
    </location>
</feature>
<feature type="strand" evidence="4">
    <location>
        <begin position="747"/>
        <end position="757"/>
    </location>
</feature>
<feature type="strand" evidence="4">
    <location>
        <begin position="759"/>
        <end position="768"/>
    </location>
</feature>
<feature type="helix" evidence="4">
    <location>
        <begin position="775"/>
        <end position="796"/>
    </location>
</feature>
<feature type="strand" evidence="4">
    <location>
        <begin position="804"/>
        <end position="813"/>
    </location>
</feature>
<feature type="turn" evidence="4">
    <location>
        <begin position="814"/>
        <end position="817"/>
    </location>
</feature>
<feature type="strand" evidence="4">
    <location>
        <begin position="818"/>
        <end position="827"/>
    </location>
</feature>
<feature type="helix" evidence="4">
    <location>
        <begin position="829"/>
        <end position="831"/>
    </location>
</feature>
<feature type="helix" evidence="4">
    <location>
        <begin position="832"/>
        <end position="849"/>
    </location>
</feature>
<feature type="helix" evidence="4">
    <location>
        <begin position="853"/>
        <end position="868"/>
    </location>
</feature>
<feature type="strand" evidence="4">
    <location>
        <begin position="869"/>
        <end position="873"/>
    </location>
</feature>
<feature type="helix" evidence="4">
    <location>
        <begin position="874"/>
        <end position="888"/>
    </location>
</feature>
<feature type="helix" evidence="4">
    <location>
        <begin position="893"/>
        <end position="896"/>
    </location>
</feature>
<feature type="helix" evidence="4">
    <location>
        <begin position="897"/>
        <end position="901"/>
    </location>
</feature>
<feature type="helix" evidence="4">
    <location>
        <begin position="906"/>
        <end position="916"/>
    </location>
</feature>
<feature type="strand" evidence="4">
    <location>
        <begin position="917"/>
        <end position="919"/>
    </location>
</feature>
<feature type="strand" evidence="4">
    <location>
        <begin position="921"/>
        <end position="930"/>
    </location>
</feature>
<accession>P31828</accession>
<accession>P31829</accession>
<accession>P76132</accession>
<accession>P78158</accession>
<name>PQQL_ECOLI</name>
<gene>
    <name type="primary">pqqL</name>
    <name type="synonym">yddC</name>
    <name type="ordered locus">b1494</name>
    <name type="ordered locus">JW1489</name>
</gene>
<keyword id="KW-0002">3D-structure</keyword>
<keyword id="KW-0378">Hydrolase</keyword>
<keyword id="KW-0479">Metal-binding</keyword>
<keyword id="KW-0482">Metalloprotease</keyword>
<keyword id="KW-0645">Protease</keyword>
<keyword id="KW-1185">Reference proteome</keyword>
<keyword id="KW-0862">Zinc</keyword>
<evidence type="ECO:0000250" key="1"/>
<evidence type="ECO:0000255" key="2">
    <source>
        <dbReference type="PROSITE-ProRule" id="PRU10096"/>
    </source>
</evidence>
<evidence type="ECO:0000305" key="3"/>
<evidence type="ECO:0007829" key="4">
    <source>
        <dbReference type="PDB" id="6OFS"/>
    </source>
</evidence>
<evidence type="ECO:0007829" key="5">
    <source>
        <dbReference type="PDB" id="6OFT"/>
    </source>
</evidence>
<dbReference type="EC" id="3.4.24.-"/>
<dbReference type="EMBL" id="X71917">
    <property type="protein sequence ID" value="CAA50734.1"/>
    <property type="status" value="ALT_FRAME"/>
    <property type="molecule type" value="Genomic_DNA"/>
</dbReference>
<dbReference type="EMBL" id="X71917">
    <property type="protein sequence ID" value="CAA50735.1"/>
    <property type="status" value="ALT_FRAME"/>
    <property type="molecule type" value="Genomic_DNA"/>
</dbReference>
<dbReference type="EMBL" id="U00096">
    <property type="protein sequence ID" value="AAC74567.1"/>
    <property type="molecule type" value="Genomic_DNA"/>
</dbReference>
<dbReference type="EMBL" id="AP009048">
    <property type="protein sequence ID" value="BAA15164.2"/>
    <property type="molecule type" value="Genomic_DNA"/>
</dbReference>
<dbReference type="PIR" id="A64903">
    <property type="entry name" value="A64903"/>
</dbReference>
<dbReference type="RefSeq" id="NP_416011.1">
    <property type="nucleotide sequence ID" value="NC_000913.3"/>
</dbReference>
<dbReference type="PDB" id="6OFS">
    <property type="method" value="X-ray"/>
    <property type="resolution" value="2.60 A"/>
    <property type="chains" value="A=27-931"/>
</dbReference>
<dbReference type="PDB" id="6OFT">
    <property type="method" value="X-ray"/>
    <property type="resolution" value="2.00 A"/>
    <property type="chains" value="A/B=27-497"/>
</dbReference>
<dbReference type="PDBsum" id="6OFS"/>
<dbReference type="PDBsum" id="6OFT"/>
<dbReference type="SASBDB" id="P31828"/>
<dbReference type="SMR" id="P31828"/>
<dbReference type="BioGRID" id="4260787">
    <property type="interactions" value="28"/>
</dbReference>
<dbReference type="BioGRID" id="850420">
    <property type="interactions" value="1"/>
</dbReference>
<dbReference type="DIP" id="DIP-10556N"/>
<dbReference type="FunCoup" id="P31828">
    <property type="interactions" value="213"/>
</dbReference>
<dbReference type="IntAct" id="P31828">
    <property type="interactions" value="12"/>
</dbReference>
<dbReference type="STRING" id="511145.b1494"/>
<dbReference type="MEROPS" id="M16.A05"/>
<dbReference type="jPOST" id="P31828"/>
<dbReference type="PaxDb" id="511145-b1494"/>
<dbReference type="EnsemblBacteria" id="AAC74567">
    <property type="protein sequence ID" value="AAC74567"/>
    <property type="gene ID" value="b1494"/>
</dbReference>
<dbReference type="GeneID" id="946059"/>
<dbReference type="KEGG" id="ecj:JW1489"/>
<dbReference type="KEGG" id="eco:b1494"/>
<dbReference type="PATRIC" id="fig|511145.12.peg.1561"/>
<dbReference type="EchoBASE" id="EB1695"/>
<dbReference type="eggNOG" id="COG0612">
    <property type="taxonomic scope" value="Bacteria"/>
</dbReference>
<dbReference type="HOGENOM" id="CLU_008156_0_0_6"/>
<dbReference type="InParanoid" id="P31828"/>
<dbReference type="OMA" id="PMSGRIH"/>
<dbReference type="OrthoDB" id="9811314at2"/>
<dbReference type="PhylomeDB" id="P31828"/>
<dbReference type="BioCyc" id="EcoCyc:EG11744-MONOMER"/>
<dbReference type="PRO" id="PR:P31828"/>
<dbReference type="Proteomes" id="UP000000625">
    <property type="component" value="Chromosome"/>
</dbReference>
<dbReference type="GO" id="GO:0005829">
    <property type="term" value="C:cytosol"/>
    <property type="evidence" value="ECO:0000314"/>
    <property type="project" value="EcoCyc"/>
</dbReference>
<dbReference type="GO" id="GO:0030288">
    <property type="term" value="C:outer membrane-bounded periplasmic space"/>
    <property type="evidence" value="ECO:0000314"/>
    <property type="project" value="EcoCyc"/>
</dbReference>
<dbReference type="GO" id="GO:0004222">
    <property type="term" value="F:metalloendopeptidase activity"/>
    <property type="evidence" value="ECO:0007669"/>
    <property type="project" value="InterPro"/>
</dbReference>
<dbReference type="GO" id="GO:0008237">
    <property type="term" value="F:metallopeptidase activity"/>
    <property type="evidence" value="ECO:0000255"/>
    <property type="project" value="EcoCyc"/>
</dbReference>
<dbReference type="GO" id="GO:0008233">
    <property type="term" value="F:peptidase activity"/>
    <property type="evidence" value="ECO:0000314"/>
    <property type="project" value="EcoCyc"/>
</dbReference>
<dbReference type="GO" id="GO:0008270">
    <property type="term" value="F:zinc ion binding"/>
    <property type="evidence" value="ECO:0000255"/>
    <property type="project" value="EcoCyc"/>
</dbReference>
<dbReference type="GO" id="GO:0006508">
    <property type="term" value="P:proteolysis"/>
    <property type="evidence" value="ECO:0007669"/>
    <property type="project" value="UniProtKB-KW"/>
</dbReference>
<dbReference type="FunFam" id="3.30.830.10:FF:000087">
    <property type="entry name" value="Probable zinc protease PqqL"/>
    <property type="match status" value="1"/>
</dbReference>
<dbReference type="FunFam" id="3.30.830.10:FF:000090">
    <property type="entry name" value="Probable zinc protease PqqL"/>
    <property type="match status" value="1"/>
</dbReference>
<dbReference type="FunFam" id="3.30.830.10:FF:000091">
    <property type="entry name" value="Probable zinc protease PqqL"/>
    <property type="match status" value="1"/>
</dbReference>
<dbReference type="Gene3D" id="3.30.830.10">
    <property type="entry name" value="Metalloenzyme, LuxS/M16 peptidase-like"/>
    <property type="match status" value="4"/>
</dbReference>
<dbReference type="InterPro" id="IPR011249">
    <property type="entry name" value="Metalloenz_LuxS/M16"/>
</dbReference>
<dbReference type="InterPro" id="IPR050361">
    <property type="entry name" value="MPP/UQCRC_Complex"/>
</dbReference>
<dbReference type="InterPro" id="IPR011765">
    <property type="entry name" value="Pept_M16_N"/>
</dbReference>
<dbReference type="InterPro" id="IPR001431">
    <property type="entry name" value="Pept_M16_Zn_BS"/>
</dbReference>
<dbReference type="InterPro" id="IPR007863">
    <property type="entry name" value="Peptidase_M16_C"/>
</dbReference>
<dbReference type="PANTHER" id="PTHR11851">
    <property type="entry name" value="METALLOPROTEASE"/>
    <property type="match status" value="1"/>
</dbReference>
<dbReference type="PANTHER" id="PTHR11851:SF49">
    <property type="entry name" value="MITOCHONDRIAL-PROCESSING PEPTIDASE SUBUNIT ALPHA"/>
    <property type="match status" value="1"/>
</dbReference>
<dbReference type="Pfam" id="PF00675">
    <property type="entry name" value="Peptidase_M16"/>
    <property type="match status" value="1"/>
</dbReference>
<dbReference type="Pfam" id="PF05193">
    <property type="entry name" value="Peptidase_M16_C"/>
    <property type="match status" value="2"/>
</dbReference>
<dbReference type="SUPFAM" id="SSF63411">
    <property type="entry name" value="LuxS/MPP-like metallohydrolase"/>
    <property type="match status" value="4"/>
</dbReference>
<dbReference type="PROSITE" id="PS00143">
    <property type="entry name" value="INSULINASE"/>
    <property type="match status" value="1"/>
</dbReference>
<proteinExistence type="evidence at protein level"/>
<sequence length="931" mass="104656">MEIIMRNLCFLLTLVATLLLPGRLIAAALPQDEKLITGQLDNGLRYMIYPHAHPKDQVNLWLQIHTGSLQEEDNELGVAHFVEHMMFNGTKTWPGNKVIETFESMGLRFGRDVNAYTSYDETVYQVSLPTTQKQNLQQVMAIFSEWSNAATFEKLEVDAERGVITEEWRAHQDAKWRTSQARRPFLLANTRNLDREPIGLMDTVATVTPAQLRQFYQRWYQPNNMTFIVVGDIDSKEALALIKDNLSKLPANKAAENRVWPTKAENHLRFNIINDKENRVNGIALYYRLPMVQVNDEQSFIEQAEWSMLVQLFNQRLQERIQSGELKTISGGTARSVKIAPDYQSLFFRVNARDDNMQDAANALMAELATIDQHGFSAEELDDVKSTRLTWLKNAVDQQAERDLRMLTSRLASSSLNNTPFLSPEETYQLSKRLWQQITVQSLAEKWQQLRKNQDAFWEQMVNNEVAAKKALSPAAILALEKEYANKKLAAYVFPGRNLSLTVDADPQAEISSKETLAENLTSLTLSNGARVILAKSAGEEQKLQIIAVSNKGDLSFPAQQKSLIALANKAVSGSGVGELSSSSLKRWSAENSVTMSSKVSGMNTLLSVSARTNNPEPGFQLINQRITHSTINDNIWASLQNAQIQALKTLDQRPAEKFAQQMYETRYADDRTKLLQENQIAQFTAADALAADRQLFSSPADITFVIVGNVAEDKLVALITRYLGSIKHSDSPLAAGKPLTRATDNASVTVKEQNEPVAQVSQWKRYDSRTPVNLPTRMALDAFNVALAKDLRVNIREQASGAYSVSSRLSVDPQAKDISHLLAFTCQPERHDELLTLANEVMVKRLAKGISEQELNEYQQNVQRSLDIQQRSVQQLANTIVNSLIQYDDPAAWTEQEQLLKQMTVENVNTAVKQYLSHPVNTYTGVLLPK</sequence>
<comment type="cofactor">
    <cofactor evidence="1">
        <name>Zn(2+)</name>
        <dbReference type="ChEBI" id="CHEBI:29105"/>
    </cofactor>
    <text evidence="1">Binds 1 zinc ion per subunit.</text>
</comment>
<comment type="similarity">
    <text evidence="3">Belongs to the peptidase M16 family.</text>
</comment>
<comment type="sequence caution" evidence="3">
    <conflict type="frameshift">
        <sequence resource="EMBL-CDS" id="CAA50735"/>
    </conflict>
    <text>Produces two separate ORFs.</text>
</comment>
<protein>
    <recommendedName>
        <fullName>Probable zinc protease PqqL</fullName>
        <ecNumber>3.4.24.-</ecNumber>
    </recommendedName>
</protein>
<reference key="1">
    <citation type="journal article" date="1996" name="Biochimie">
        <title>Sequence and functional analysis of an Escherichia coli DNA fragment able to complement pqqE and pqqF mutants from Methylobacterium organophilum.</title>
        <authorList>
            <person name="Turlin E."/>
            <person name="Gasser F."/>
            <person name="Biville F."/>
        </authorList>
    </citation>
    <scope>NUCLEOTIDE SEQUENCE [GENOMIC DNA]</scope>
    <source>
        <strain>K12</strain>
    </source>
</reference>
<reference key="2">
    <citation type="journal article" date="1996" name="DNA Res.">
        <title>A 570-kb DNA sequence of the Escherichia coli K-12 genome corresponding to the 28.0-40.1 min region on the linkage map.</title>
        <authorList>
            <person name="Aiba H."/>
            <person name="Baba T."/>
            <person name="Fujita K."/>
            <person name="Hayashi K."/>
            <person name="Inada T."/>
            <person name="Isono K."/>
            <person name="Itoh T."/>
            <person name="Kasai H."/>
            <person name="Kashimoto K."/>
            <person name="Kimura S."/>
            <person name="Kitakawa M."/>
            <person name="Kitagawa M."/>
            <person name="Makino K."/>
            <person name="Miki T."/>
            <person name="Mizobuchi K."/>
            <person name="Mori H."/>
            <person name="Mori T."/>
            <person name="Motomura K."/>
            <person name="Nakade S."/>
            <person name="Nakamura Y."/>
            <person name="Nashimoto H."/>
            <person name="Nishio Y."/>
            <person name="Oshima T."/>
            <person name="Saito N."/>
            <person name="Sampei G."/>
            <person name="Seki Y."/>
            <person name="Sivasundaram S."/>
            <person name="Tagami H."/>
            <person name="Takeda J."/>
            <person name="Takemoto K."/>
            <person name="Takeuchi Y."/>
            <person name="Wada C."/>
            <person name="Yamamoto Y."/>
            <person name="Horiuchi T."/>
        </authorList>
    </citation>
    <scope>NUCLEOTIDE SEQUENCE [LARGE SCALE GENOMIC DNA]</scope>
    <source>
        <strain>K12 / W3110 / ATCC 27325 / DSM 5911</strain>
    </source>
</reference>
<reference key="3">
    <citation type="journal article" date="1997" name="Science">
        <title>The complete genome sequence of Escherichia coli K-12.</title>
        <authorList>
            <person name="Blattner F.R."/>
            <person name="Plunkett G. III"/>
            <person name="Bloch C.A."/>
            <person name="Perna N.T."/>
            <person name="Burland V."/>
            <person name="Riley M."/>
            <person name="Collado-Vides J."/>
            <person name="Glasner J.D."/>
            <person name="Rode C.K."/>
            <person name="Mayhew G.F."/>
            <person name="Gregor J."/>
            <person name="Davis N.W."/>
            <person name="Kirkpatrick H.A."/>
            <person name="Goeden M.A."/>
            <person name="Rose D.J."/>
            <person name="Mau B."/>
            <person name="Shao Y."/>
        </authorList>
    </citation>
    <scope>NUCLEOTIDE SEQUENCE [LARGE SCALE GENOMIC DNA]</scope>
    <source>
        <strain>K12 / MG1655 / ATCC 47076</strain>
    </source>
</reference>
<reference key="4">
    <citation type="journal article" date="2006" name="Mol. Syst. Biol.">
        <title>Highly accurate genome sequences of Escherichia coli K-12 strains MG1655 and W3110.</title>
        <authorList>
            <person name="Hayashi K."/>
            <person name="Morooka N."/>
            <person name="Yamamoto Y."/>
            <person name="Fujita K."/>
            <person name="Isono K."/>
            <person name="Choi S."/>
            <person name="Ohtsubo E."/>
            <person name="Baba T."/>
            <person name="Wanner B.L."/>
            <person name="Mori H."/>
            <person name="Horiuchi T."/>
        </authorList>
    </citation>
    <scope>NUCLEOTIDE SEQUENCE [LARGE SCALE GENOMIC DNA]</scope>
    <source>
        <strain>K12 / W3110 / ATCC 27325 / DSM 5911</strain>
    </source>
</reference>